<reference key="1">
    <citation type="journal article" date="2002" name="Nature">
        <title>The genome sequence of Schizosaccharomyces pombe.</title>
        <authorList>
            <person name="Wood V."/>
            <person name="Gwilliam R."/>
            <person name="Rajandream M.A."/>
            <person name="Lyne M.H."/>
            <person name="Lyne R."/>
            <person name="Stewart A."/>
            <person name="Sgouros J.G."/>
            <person name="Peat N."/>
            <person name="Hayles J."/>
            <person name="Baker S.G."/>
            <person name="Basham D."/>
            <person name="Bowman S."/>
            <person name="Brooks K."/>
            <person name="Brown D."/>
            <person name="Brown S."/>
            <person name="Chillingworth T."/>
            <person name="Churcher C.M."/>
            <person name="Collins M."/>
            <person name="Connor R."/>
            <person name="Cronin A."/>
            <person name="Davis P."/>
            <person name="Feltwell T."/>
            <person name="Fraser A."/>
            <person name="Gentles S."/>
            <person name="Goble A."/>
            <person name="Hamlin N."/>
            <person name="Harris D.E."/>
            <person name="Hidalgo J."/>
            <person name="Hodgson G."/>
            <person name="Holroyd S."/>
            <person name="Hornsby T."/>
            <person name="Howarth S."/>
            <person name="Huckle E.J."/>
            <person name="Hunt S."/>
            <person name="Jagels K."/>
            <person name="James K.D."/>
            <person name="Jones L."/>
            <person name="Jones M."/>
            <person name="Leather S."/>
            <person name="McDonald S."/>
            <person name="McLean J."/>
            <person name="Mooney P."/>
            <person name="Moule S."/>
            <person name="Mungall K.L."/>
            <person name="Murphy L.D."/>
            <person name="Niblett D."/>
            <person name="Odell C."/>
            <person name="Oliver K."/>
            <person name="O'Neil S."/>
            <person name="Pearson D."/>
            <person name="Quail M.A."/>
            <person name="Rabbinowitsch E."/>
            <person name="Rutherford K.M."/>
            <person name="Rutter S."/>
            <person name="Saunders D."/>
            <person name="Seeger K."/>
            <person name="Sharp S."/>
            <person name="Skelton J."/>
            <person name="Simmonds M.N."/>
            <person name="Squares R."/>
            <person name="Squares S."/>
            <person name="Stevens K."/>
            <person name="Taylor K."/>
            <person name="Taylor R.G."/>
            <person name="Tivey A."/>
            <person name="Walsh S.V."/>
            <person name="Warren T."/>
            <person name="Whitehead S."/>
            <person name="Woodward J.R."/>
            <person name="Volckaert G."/>
            <person name="Aert R."/>
            <person name="Robben J."/>
            <person name="Grymonprez B."/>
            <person name="Weltjens I."/>
            <person name="Vanstreels E."/>
            <person name="Rieger M."/>
            <person name="Schaefer M."/>
            <person name="Mueller-Auer S."/>
            <person name="Gabel C."/>
            <person name="Fuchs M."/>
            <person name="Duesterhoeft A."/>
            <person name="Fritzc C."/>
            <person name="Holzer E."/>
            <person name="Moestl D."/>
            <person name="Hilbert H."/>
            <person name="Borzym K."/>
            <person name="Langer I."/>
            <person name="Beck A."/>
            <person name="Lehrach H."/>
            <person name="Reinhardt R."/>
            <person name="Pohl T.M."/>
            <person name="Eger P."/>
            <person name="Zimmermann W."/>
            <person name="Wedler H."/>
            <person name="Wambutt R."/>
            <person name="Purnelle B."/>
            <person name="Goffeau A."/>
            <person name="Cadieu E."/>
            <person name="Dreano S."/>
            <person name="Gloux S."/>
            <person name="Lelaure V."/>
            <person name="Mottier S."/>
            <person name="Galibert F."/>
            <person name="Aves S.J."/>
            <person name="Xiang Z."/>
            <person name="Hunt C."/>
            <person name="Moore K."/>
            <person name="Hurst S.M."/>
            <person name="Lucas M."/>
            <person name="Rochet M."/>
            <person name="Gaillardin C."/>
            <person name="Tallada V.A."/>
            <person name="Garzon A."/>
            <person name="Thode G."/>
            <person name="Daga R.R."/>
            <person name="Cruzado L."/>
            <person name="Jimenez J."/>
            <person name="Sanchez M."/>
            <person name="del Rey F."/>
            <person name="Benito J."/>
            <person name="Dominguez A."/>
            <person name="Revuelta J.L."/>
            <person name="Moreno S."/>
            <person name="Armstrong J."/>
            <person name="Forsburg S.L."/>
            <person name="Cerutti L."/>
            <person name="Lowe T."/>
            <person name="McCombie W.R."/>
            <person name="Paulsen I."/>
            <person name="Potashkin J."/>
            <person name="Shpakovski G.V."/>
            <person name="Ussery D."/>
            <person name="Barrell B.G."/>
            <person name="Nurse P."/>
        </authorList>
    </citation>
    <scope>NUCLEOTIDE SEQUENCE [LARGE SCALE GENOMIC DNA]</scope>
    <source>
        <strain>972 / ATCC 24843</strain>
    </source>
</reference>
<comment type="function">
    <text evidence="1">Membrane-anchoring subunit of succinate dehydrogenase (SDH) that is involved in complex II of the mitochondrial electron transport chain and is responsible for transferring electrons from succinate to ubiquinone (coenzyme Q).</text>
</comment>
<comment type="cofactor">
    <cofactor evidence="1">
        <name>heme</name>
        <dbReference type="ChEBI" id="CHEBI:30413"/>
    </cofactor>
    <text evidence="1">The heme is bound between the two transmembrane subunits.</text>
</comment>
<comment type="pathway">
    <text>Carbohydrate metabolism; tricarboxylic acid cycle.</text>
</comment>
<comment type="subunit">
    <text evidence="1">Forms part of complex II containing four subunits: a 70 kDa flavoprotein (FP), a 27 kDa iron-sulfur protein (IP), a cytochrome B and a membrane-anchoring protein.</text>
</comment>
<comment type="subcellular location">
    <subcellularLocation>
        <location evidence="1">Mitochondrion inner membrane</location>
        <topology evidence="1">Multi-pass membrane protein</topology>
    </subcellularLocation>
</comment>
<comment type="similarity">
    <text evidence="3">Belongs to the cytochrome b560 family.</text>
</comment>
<proteinExistence type="inferred from homology"/>
<sequence length="180" mass="20136">MFATRSFCLSSSLFRPAAQLLRPAGRSTLRNVWRRSIATEHLTQTEANSRLASQRVHRPNSPHLTIYEPQLTWYLSSLHRITGCVVAGTLYAFAMGYLVAPLAGYSLDTATISGLIQQVPTWIKVPAKFVISYPLTFHIFNGIRHLIWDTTKELSLKGVYRTGYAVLALSVLTSGYFAMI</sequence>
<accession>O74882</accession>
<evidence type="ECO:0000250" key="1"/>
<evidence type="ECO:0000255" key="2"/>
<evidence type="ECO:0000305" key="3"/>
<gene>
    <name type="primary">sdh3</name>
    <name type="ORF">SPCC330.12c</name>
</gene>
<organism>
    <name type="scientific">Schizosaccharomyces pombe (strain 972 / ATCC 24843)</name>
    <name type="common">Fission yeast</name>
    <dbReference type="NCBI Taxonomy" id="284812"/>
    <lineage>
        <taxon>Eukaryota</taxon>
        <taxon>Fungi</taxon>
        <taxon>Dikarya</taxon>
        <taxon>Ascomycota</taxon>
        <taxon>Taphrinomycotina</taxon>
        <taxon>Schizosaccharomycetes</taxon>
        <taxon>Schizosaccharomycetales</taxon>
        <taxon>Schizosaccharomycetaceae</taxon>
        <taxon>Schizosaccharomyces</taxon>
    </lineage>
</organism>
<protein>
    <recommendedName>
        <fullName>Succinate dehydrogenase cytochrome B subunit, mitochondrial</fullName>
    </recommendedName>
</protein>
<feature type="transit peptide" description="Mitochondrion">
    <location>
        <begin position="1"/>
        <end status="unknown"/>
    </location>
</feature>
<feature type="chain" id="PRO_0000041773" description="Succinate dehydrogenase cytochrome B subunit, mitochondrial">
    <location>
        <begin status="unknown"/>
        <end position="180"/>
    </location>
</feature>
<feature type="topological domain" description="Mitochondrial matrix" evidence="1">
    <location>
        <begin position="1"/>
        <end position="82"/>
    </location>
</feature>
<feature type="transmembrane region" description="Helical" evidence="2">
    <location>
        <begin position="83"/>
        <end position="103"/>
    </location>
</feature>
<feature type="topological domain" description="Mitochondrial intermembrane" evidence="1">
    <location>
        <begin position="104"/>
        <end position="122"/>
    </location>
</feature>
<feature type="transmembrane region" description="Helical" evidence="2">
    <location>
        <begin position="123"/>
        <end position="143"/>
    </location>
</feature>
<feature type="topological domain" description="Mitochondrial matrix" evidence="1">
    <location>
        <begin position="144"/>
        <end position="159"/>
    </location>
</feature>
<feature type="transmembrane region" description="Helical" evidence="2">
    <location>
        <begin position="160"/>
        <end position="180"/>
    </location>
</feature>
<feature type="binding site" description="axial binding residue" evidence="1">
    <location>
        <position position="138"/>
    </location>
    <ligand>
        <name>heme</name>
        <dbReference type="ChEBI" id="CHEBI:30413"/>
        <note>ligand shared with second transmembrane subunit</note>
    </ligand>
    <ligandPart>
        <name>Fe</name>
        <dbReference type="ChEBI" id="CHEBI:18248"/>
    </ligandPart>
</feature>
<keyword id="KW-0249">Electron transport</keyword>
<keyword id="KW-0349">Heme</keyword>
<keyword id="KW-0408">Iron</keyword>
<keyword id="KW-0472">Membrane</keyword>
<keyword id="KW-0479">Metal-binding</keyword>
<keyword id="KW-0496">Mitochondrion</keyword>
<keyword id="KW-0999">Mitochondrion inner membrane</keyword>
<keyword id="KW-1185">Reference proteome</keyword>
<keyword id="KW-0809">Transit peptide</keyword>
<keyword id="KW-0812">Transmembrane</keyword>
<keyword id="KW-1133">Transmembrane helix</keyword>
<keyword id="KW-0813">Transport</keyword>
<keyword id="KW-0816">Tricarboxylic acid cycle</keyword>
<name>SDH3_SCHPO</name>
<dbReference type="EMBL" id="CU329672">
    <property type="protein sequence ID" value="CAA20917.1"/>
    <property type="molecule type" value="Genomic_DNA"/>
</dbReference>
<dbReference type="PIR" id="T41322">
    <property type="entry name" value="T41322"/>
</dbReference>
<dbReference type="RefSeq" id="NP_587712.1">
    <property type="nucleotide sequence ID" value="NM_001022707.2"/>
</dbReference>
<dbReference type="SMR" id="O74882"/>
<dbReference type="BioGRID" id="275672">
    <property type="interactions" value="35"/>
</dbReference>
<dbReference type="ComplexPortal" id="CPX-566">
    <property type="entry name" value="Mitochondrial respiratory chain complex II"/>
</dbReference>
<dbReference type="FunCoup" id="O74882">
    <property type="interactions" value="235"/>
</dbReference>
<dbReference type="STRING" id="284812.O74882"/>
<dbReference type="iPTMnet" id="O74882"/>
<dbReference type="SwissPalm" id="O74882"/>
<dbReference type="PaxDb" id="4896-SPCC330.12c.1"/>
<dbReference type="EnsemblFungi" id="SPCC330.12c.1">
    <property type="protein sequence ID" value="SPCC330.12c.1:pep"/>
    <property type="gene ID" value="SPCC330.12c"/>
</dbReference>
<dbReference type="GeneID" id="2539100"/>
<dbReference type="KEGG" id="spo:2539100"/>
<dbReference type="PomBase" id="SPCC330.12c">
    <property type="gene designation" value="sdh3"/>
</dbReference>
<dbReference type="VEuPathDB" id="FungiDB:SPCC330.12c"/>
<dbReference type="eggNOG" id="KOG0449">
    <property type="taxonomic scope" value="Eukaryota"/>
</dbReference>
<dbReference type="HOGENOM" id="CLU_094691_0_0_1"/>
<dbReference type="InParanoid" id="O74882"/>
<dbReference type="OMA" id="LTWMLSG"/>
<dbReference type="PhylomeDB" id="O74882"/>
<dbReference type="Reactome" id="R-SPO-71403">
    <property type="pathway name" value="Citric acid cycle (TCA cycle)"/>
</dbReference>
<dbReference type="UniPathway" id="UPA00223"/>
<dbReference type="PRO" id="PR:O74882"/>
<dbReference type="Proteomes" id="UP000002485">
    <property type="component" value="Chromosome III"/>
</dbReference>
<dbReference type="GO" id="GO:0005743">
    <property type="term" value="C:mitochondrial inner membrane"/>
    <property type="evidence" value="ECO:0000266"/>
    <property type="project" value="ComplexPortal"/>
</dbReference>
<dbReference type="GO" id="GO:0005739">
    <property type="term" value="C:mitochondrion"/>
    <property type="evidence" value="ECO:0007005"/>
    <property type="project" value="PomBase"/>
</dbReference>
<dbReference type="GO" id="GO:0045273">
    <property type="term" value="C:respiratory chain complex II (succinate dehydrogenase)"/>
    <property type="evidence" value="ECO:0000318"/>
    <property type="project" value="GO_Central"/>
</dbReference>
<dbReference type="GO" id="GO:0009055">
    <property type="term" value="F:electron transfer activity"/>
    <property type="evidence" value="ECO:0007669"/>
    <property type="project" value="InterPro"/>
</dbReference>
<dbReference type="GO" id="GO:0046872">
    <property type="term" value="F:metal ion binding"/>
    <property type="evidence" value="ECO:0007669"/>
    <property type="project" value="UniProtKB-KW"/>
</dbReference>
<dbReference type="GO" id="GO:0043495">
    <property type="term" value="F:protein-membrane adaptor activity"/>
    <property type="evidence" value="ECO:0000303"/>
    <property type="project" value="PomBase"/>
</dbReference>
<dbReference type="GO" id="GO:0006121">
    <property type="term" value="P:mitochondrial electron transport, succinate to ubiquinone"/>
    <property type="evidence" value="ECO:0000250"/>
    <property type="project" value="PomBase"/>
</dbReference>
<dbReference type="GO" id="GO:0019643">
    <property type="term" value="P:reductive tricarboxylic acid cycle"/>
    <property type="evidence" value="ECO:0000269"/>
    <property type="project" value="PomBase"/>
</dbReference>
<dbReference type="GO" id="GO:0006099">
    <property type="term" value="P:tricarboxylic acid cycle"/>
    <property type="evidence" value="ECO:0000269"/>
    <property type="project" value="PomBase"/>
</dbReference>
<dbReference type="CDD" id="cd03499">
    <property type="entry name" value="SQR_TypeC_SdhC"/>
    <property type="match status" value="1"/>
</dbReference>
<dbReference type="FunFam" id="1.20.1300.10:FF:000008">
    <property type="entry name" value="Succinate dehydrogenase cytochrome b560 subunit"/>
    <property type="match status" value="1"/>
</dbReference>
<dbReference type="Gene3D" id="1.20.1300.10">
    <property type="entry name" value="Fumarate reductase/succinate dehydrogenase, transmembrane subunit"/>
    <property type="match status" value="1"/>
</dbReference>
<dbReference type="InterPro" id="IPR034804">
    <property type="entry name" value="SQR/QFR_C/D"/>
</dbReference>
<dbReference type="InterPro" id="IPR014314">
    <property type="entry name" value="Succ_DH_cytb556"/>
</dbReference>
<dbReference type="InterPro" id="IPR000701">
    <property type="entry name" value="SuccDH_FuR_B_TM-su"/>
</dbReference>
<dbReference type="NCBIfam" id="TIGR02970">
    <property type="entry name" value="succ_dehyd_cytB"/>
    <property type="match status" value="1"/>
</dbReference>
<dbReference type="PANTHER" id="PTHR10978">
    <property type="entry name" value="SUCCINATE DEHYDROGENASE CYTOCHROME B560 SUBUNIT"/>
    <property type="match status" value="1"/>
</dbReference>
<dbReference type="PANTHER" id="PTHR10978:SF5">
    <property type="entry name" value="SUCCINATE DEHYDROGENASE CYTOCHROME B560 SUBUNIT, MITOCHONDRIAL"/>
    <property type="match status" value="1"/>
</dbReference>
<dbReference type="Pfam" id="PF01127">
    <property type="entry name" value="Sdh_cyt"/>
    <property type="match status" value="1"/>
</dbReference>
<dbReference type="SUPFAM" id="SSF81343">
    <property type="entry name" value="Fumarate reductase respiratory complex transmembrane subunits"/>
    <property type="match status" value="1"/>
</dbReference>